<name>ISCS_COLP3</name>
<protein>
    <recommendedName>
        <fullName evidence="1">Cysteine desulfurase IscS</fullName>
        <ecNumber evidence="1">2.8.1.7</ecNumber>
    </recommendedName>
</protein>
<organism>
    <name type="scientific">Colwellia psychrerythraea (strain 34H / ATCC BAA-681)</name>
    <name type="common">Vibrio psychroerythus</name>
    <dbReference type="NCBI Taxonomy" id="167879"/>
    <lineage>
        <taxon>Bacteria</taxon>
        <taxon>Pseudomonadati</taxon>
        <taxon>Pseudomonadota</taxon>
        <taxon>Gammaproteobacteria</taxon>
        <taxon>Alteromonadales</taxon>
        <taxon>Colwelliaceae</taxon>
        <taxon>Colwellia</taxon>
    </lineage>
</organism>
<evidence type="ECO:0000255" key="1">
    <source>
        <dbReference type="HAMAP-Rule" id="MF_00331"/>
    </source>
</evidence>
<comment type="function">
    <text evidence="1">Master enzyme that delivers sulfur to a number of partners involved in Fe-S cluster assembly, tRNA modification or cofactor biosynthesis. Catalyzes the removal of elemental sulfur atoms from cysteine to produce alanine. Functions as a sulfur delivery protein for Fe-S cluster synthesis onto IscU, an Fe-S scaffold assembly protein, as well as other S acceptor proteins.</text>
</comment>
<comment type="catalytic activity">
    <reaction evidence="1">
        <text>(sulfur carrier)-H + L-cysteine = (sulfur carrier)-SH + L-alanine</text>
        <dbReference type="Rhea" id="RHEA:43892"/>
        <dbReference type="Rhea" id="RHEA-COMP:14737"/>
        <dbReference type="Rhea" id="RHEA-COMP:14739"/>
        <dbReference type="ChEBI" id="CHEBI:29917"/>
        <dbReference type="ChEBI" id="CHEBI:35235"/>
        <dbReference type="ChEBI" id="CHEBI:57972"/>
        <dbReference type="ChEBI" id="CHEBI:64428"/>
        <dbReference type="EC" id="2.8.1.7"/>
    </reaction>
</comment>
<comment type="cofactor">
    <cofactor evidence="1">
        <name>pyridoxal 5'-phosphate</name>
        <dbReference type="ChEBI" id="CHEBI:597326"/>
    </cofactor>
</comment>
<comment type="pathway">
    <text evidence="1">Cofactor biosynthesis; iron-sulfur cluster biosynthesis.</text>
</comment>
<comment type="subunit">
    <text evidence="1">Homodimer. Forms a heterotetramer with IscU, interacts with other sulfur acceptors.</text>
</comment>
<comment type="subcellular location">
    <subcellularLocation>
        <location evidence="1">Cytoplasm</location>
    </subcellularLocation>
</comment>
<comment type="similarity">
    <text evidence="1">Belongs to the class-V pyridoxal-phosphate-dependent aminotransferase family. NifS/IscS subfamily.</text>
</comment>
<keyword id="KW-0001">2Fe-2S</keyword>
<keyword id="KW-0963">Cytoplasm</keyword>
<keyword id="KW-0408">Iron</keyword>
<keyword id="KW-0411">Iron-sulfur</keyword>
<keyword id="KW-0479">Metal-binding</keyword>
<keyword id="KW-0663">Pyridoxal phosphate</keyword>
<keyword id="KW-0808">Transferase</keyword>
<reference key="1">
    <citation type="journal article" date="2005" name="Proc. Natl. Acad. Sci. U.S.A.">
        <title>The psychrophilic lifestyle as revealed by the genome sequence of Colwellia psychrerythraea 34H through genomic and proteomic analyses.</title>
        <authorList>
            <person name="Methe B.A."/>
            <person name="Nelson K.E."/>
            <person name="Deming J.W."/>
            <person name="Momen B."/>
            <person name="Melamud E."/>
            <person name="Zhang X."/>
            <person name="Moult J."/>
            <person name="Madupu R."/>
            <person name="Nelson W.C."/>
            <person name="Dodson R.J."/>
            <person name="Brinkac L.M."/>
            <person name="Daugherty S.C."/>
            <person name="Durkin A.S."/>
            <person name="DeBoy R.T."/>
            <person name="Kolonay J.F."/>
            <person name="Sullivan S.A."/>
            <person name="Zhou L."/>
            <person name="Davidsen T.M."/>
            <person name="Wu M."/>
            <person name="Huston A.L."/>
            <person name="Lewis M."/>
            <person name="Weaver B."/>
            <person name="Weidman J.F."/>
            <person name="Khouri H."/>
            <person name="Utterback T.R."/>
            <person name="Feldblyum T.V."/>
            <person name="Fraser C.M."/>
        </authorList>
    </citation>
    <scope>NUCLEOTIDE SEQUENCE [LARGE SCALE GENOMIC DNA]</scope>
    <source>
        <strain>34H / ATCC BAA-681</strain>
    </source>
</reference>
<dbReference type="EC" id="2.8.1.7" evidence="1"/>
<dbReference type="EMBL" id="CP000083">
    <property type="protein sequence ID" value="AAZ24811.1"/>
    <property type="molecule type" value="Genomic_DNA"/>
</dbReference>
<dbReference type="RefSeq" id="WP_011041969.1">
    <property type="nucleotide sequence ID" value="NC_003910.7"/>
</dbReference>
<dbReference type="SMR" id="Q486Z0"/>
<dbReference type="STRING" id="167879.CPS_1132"/>
<dbReference type="KEGG" id="cps:CPS_1132"/>
<dbReference type="eggNOG" id="COG1104">
    <property type="taxonomic scope" value="Bacteria"/>
</dbReference>
<dbReference type="HOGENOM" id="CLU_003433_0_2_6"/>
<dbReference type="UniPathway" id="UPA00266"/>
<dbReference type="Proteomes" id="UP000000547">
    <property type="component" value="Chromosome"/>
</dbReference>
<dbReference type="GO" id="GO:1990221">
    <property type="term" value="C:L-cysteine desulfurase complex"/>
    <property type="evidence" value="ECO:0007669"/>
    <property type="project" value="UniProtKB-ARBA"/>
</dbReference>
<dbReference type="GO" id="GO:0051537">
    <property type="term" value="F:2 iron, 2 sulfur cluster binding"/>
    <property type="evidence" value="ECO:0007669"/>
    <property type="project" value="UniProtKB-UniRule"/>
</dbReference>
<dbReference type="GO" id="GO:0031071">
    <property type="term" value="F:cysteine desulfurase activity"/>
    <property type="evidence" value="ECO:0007669"/>
    <property type="project" value="UniProtKB-UniRule"/>
</dbReference>
<dbReference type="GO" id="GO:0046872">
    <property type="term" value="F:metal ion binding"/>
    <property type="evidence" value="ECO:0007669"/>
    <property type="project" value="UniProtKB-KW"/>
</dbReference>
<dbReference type="GO" id="GO:0030170">
    <property type="term" value="F:pyridoxal phosphate binding"/>
    <property type="evidence" value="ECO:0007669"/>
    <property type="project" value="UniProtKB-UniRule"/>
</dbReference>
<dbReference type="GO" id="GO:0044571">
    <property type="term" value="P:[2Fe-2S] cluster assembly"/>
    <property type="evidence" value="ECO:0007669"/>
    <property type="project" value="UniProtKB-UniRule"/>
</dbReference>
<dbReference type="FunFam" id="3.40.640.10:FF:000003">
    <property type="entry name" value="Cysteine desulfurase IscS"/>
    <property type="match status" value="1"/>
</dbReference>
<dbReference type="FunFam" id="3.90.1150.10:FF:000002">
    <property type="entry name" value="Cysteine desulfurase IscS"/>
    <property type="match status" value="1"/>
</dbReference>
<dbReference type="Gene3D" id="3.90.1150.10">
    <property type="entry name" value="Aspartate Aminotransferase, domain 1"/>
    <property type="match status" value="1"/>
</dbReference>
<dbReference type="Gene3D" id="3.40.640.10">
    <property type="entry name" value="Type I PLP-dependent aspartate aminotransferase-like (Major domain)"/>
    <property type="match status" value="1"/>
</dbReference>
<dbReference type="HAMAP" id="MF_00331">
    <property type="entry name" value="Cys_desulf_IscS"/>
    <property type="match status" value="1"/>
</dbReference>
<dbReference type="InterPro" id="IPR000192">
    <property type="entry name" value="Aminotrans_V_dom"/>
</dbReference>
<dbReference type="InterPro" id="IPR020578">
    <property type="entry name" value="Aminotrans_V_PyrdxlP_BS"/>
</dbReference>
<dbReference type="InterPro" id="IPR010240">
    <property type="entry name" value="Cys_deSase_IscS"/>
</dbReference>
<dbReference type="InterPro" id="IPR016454">
    <property type="entry name" value="Cysteine_dSase"/>
</dbReference>
<dbReference type="InterPro" id="IPR015424">
    <property type="entry name" value="PyrdxlP-dep_Trfase"/>
</dbReference>
<dbReference type="InterPro" id="IPR015421">
    <property type="entry name" value="PyrdxlP-dep_Trfase_major"/>
</dbReference>
<dbReference type="InterPro" id="IPR015422">
    <property type="entry name" value="PyrdxlP-dep_Trfase_small"/>
</dbReference>
<dbReference type="NCBIfam" id="TIGR02006">
    <property type="entry name" value="IscS"/>
    <property type="match status" value="1"/>
</dbReference>
<dbReference type="NCBIfam" id="NF010611">
    <property type="entry name" value="PRK14012.1"/>
    <property type="match status" value="1"/>
</dbReference>
<dbReference type="PANTHER" id="PTHR11601:SF34">
    <property type="entry name" value="CYSTEINE DESULFURASE"/>
    <property type="match status" value="1"/>
</dbReference>
<dbReference type="PANTHER" id="PTHR11601">
    <property type="entry name" value="CYSTEINE DESULFURYLASE FAMILY MEMBER"/>
    <property type="match status" value="1"/>
</dbReference>
<dbReference type="Pfam" id="PF00266">
    <property type="entry name" value="Aminotran_5"/>
    <property type="match status" value="1"/>
</dbReference>
<dbReference type="PIRSF" id="PIRSF005572">
    <property type="entry name" value="NifS"/>
    <property type="match status" value="1"/>
</dbReference>
<dbReference type="SUPFAM" id="SSF53383">
    <property type="entry name" value="PLP-dependent transferases"/>
    <property type="match status" value="1"/>
</dbReference>
<dbReference type="PROSITE" id="PS00595">
    <property type="entry name" value="AA_TRANSFER_CLASS_5"/>
    <property type="match status" value="1"/>
</dbReference>
<gene>
    <name evidence="1" type="primary">iscS</name>
    <name type="ordered locus">CPS_1132</name>
</gene>
<feature type="chain" id="PRO_1000019406" description="Cysteine desulfurase IscS">
    <location>
        <begin position="1"/>
        <end position="404"/>
    </location>
</feature>
<feature type="active site" description="Cysteine persulfide intermediate" evidence="1">
    <location>
        <position position="328"/>
    </location>
</feature>
<feature type="binding site" evidence="1">
    <location>
        <begin position="75"/>
        <end position="76"/>
    </location>
    <ligand>
        <name>pyridoxal 5'-phosphate</name>
        <dbReference type="ChEBI" id="CHEBI:597326"/>
    </ligand>
</feature>
<feature type="binding site" evidence="1">
    <location>
        <position position="155"/>
    </location>
    <ligand>
        <name>pyridoxal 5'-phosphate</name>
        <dbReference type="ChEBI" id="CHEBI:597326"/>
    </ligand>
</feature>
<feature type="binding site" evidence="1">
    <location>
        <position position="183"/>
    </location>
    <ligand>
        <name>pyridoxal 5'-phosphate</name>
        <dbReference type="ChEBI" id="CHEBI:597326"/>
    </ligand>
</feature>
<feature type="binding site" evidence="1">
    <location>
        <begin position="203"/>
        <end position="205"/>
    </location>
    <ligand>
        <name>pyridoxal 5'-phosphate</name>
        <dbReference type="ChEBI" id="CHEBI:597326"/>
    </ligand>
</feature>
<feature type="binding site" evidence="1">
    <location>
        <position position="243"/>
    </location>
    <ligand>
        <name>pyridoxal 5'-phosphate</name>
        <dbReference type="ChEBI" id="CHEBI:597326"/>
    </ligand>
</feature>
<feature type="binding site" description="via persulfide group" evidence="1">
    <location>
        <position position="328"/>
    </location>
    <ligand>
        <name>[2Fe-2S] cluster</name>
        <dbReference type="ChEBI" id="CHEBI:190135"/>
        <note>ligand shared with IscU</note>
    </ligand>
</feature>
<feature type="modified residue" description="N6-(pyridoxal phosphate)lysine" evidence="1">
    <location>
        <position position="206"/>
    </location>
</feature>
<proteinExistence type="inferred from homology"/>
<accession>Q486Z0</accession>
<sequence length="404" mass="44868">MKLPIYFDYSATTPVDKRVAEKMMQYMTNDGHFGNPASRSHKFGWQAEEAVDIARNQIAELINADPREIVFTSGATESNNLAIKGAANFYNKKGKHIITCKTEHKAVLDTCRELERQGFEVTYLDPEENGLIDLNKLNDAMRDDTILVSIMQVNNEIGVIQDISEIGEMCRARKIVFHVDAAQSAGKINIDMQALKVDLMSISAHKMYGPKGIGALYVSRKPRIRLEAQTHGGGHERGMRSGTLATHQIVGMGEACRLAKEEMAQDQAHVTAMRDRLWAGLNSMEQVFINGDADKRYPGNLNVSFNFVEGESLIMALKDLAVSSGSACTSASLEPSYVLRALGLNDEMAHSSIRFSFGRFTTTEEIDYAIELIKGAIGHLRDMSPLWEMFKDGIDLDSIEWAAH</sequence>